<feature type="chain" id="PRO_0000407687" description="Beta-galactosidase BgaA">
    <location>
        <begin position="1"/>
        <end position="659"/>
    </location>
</feature>
<feature type="active site" description="Proton donor" evidence="1">
    <location>
        <position position="142"/>
    </location>
</feature>
<feature type="active site" description="Nucleophile" evidence="1">
    <location>
        <position position="298"/>
    </location>
</feature>
<feature type="binding site" evidence="1">
    <location>
        <position position="103"/>
    </location>
    <ligand>
        <name>substrate</name>
    </ligand>
</feature>
<feature type="binding site" evidence="1">
    <location>
        <position position="107"/>
    </location>
    <ligand>
        <name>Zn(2+)</name>
        <dbReference type="ChEBI" id="CHEBI:29105"/>
    </ligand>
</feature>
<feature type="binding site" evidence="1">
    <location>
        <position position="141"/>
    </location>
    <ligand>
        <name>substrate</name>
    </ligand>
</feature>
<feature type="binding site" evidence="1">
    <location>
        <position position="148"/>
    </location>
    <ligand>
        <name>Zn(2+)</name>
        <dbReference type="ChEBI" id="CHEBI:29105"/>
    </ligand>
</feature>
<feature type="binding site" evidence="1">
    <location>
        <position position="150"/>
    </location>
    <ligand>
        <name>Zn(2+)</name>
        <dbReference type="ChEBI" id="CHEBI:29105"/>
    </ligand>
</feature>
<feature type="binding site" evidence="1">
    <location>
        <position position="153"/>
    </location>
    <ligand>
        <name>Zn(2+)</name>
        <dbReference type="ChEBI" id="CHEBI:29105"/>
    </ligand>
</feature>
<feature type="binding site" evidence="1">
    <location>
        <position position="307"/>
    </location>
    <ligand>
        <name>substrate</name>
    </ligand>
</feature>
<protein>
    <recommendedName>
        <fullName>Beta-galactosidase BgaA</fullName>
        <shortName evidence="2">Beta-gal</shortName>
        <ecNumber>3.2.1.23</ecNumber>
    </recommendedName>
    <alternativeName>
        <fullName evidence="5">Alpha-L-arabinopyranosidase</fullName>
    </alternativeName>
</protein>
<organism>
    <name type="scientific">Clostridium cellulovorans (strain ATCC 35296 / DSM 3052 / OCM 3 / 743B)</name>
    <dbReference type="NCBI Taxonomy" id="573061"/>
    <lineage>
        <taxon>Bacteria</taxon>
        <taxon>Bacillati</taxon>
        <taxon>Bacillota</taxon>
        <taxon>Clostridia</taxon>
        <taxon>Eubacteriales</taxon>
        <taxon>Clostridiaceae</taxon>
        <taxon>Clostridium</taxon>
    </lineage>
</organism>
<comment type="function">
    <text evidence="4">Involved in plant cell wall degradation in cooperation with cellulosome. Hydrolyzes both p-nitrophenyl-alpha-L-arabinopyranoside (pNPAp) and p-nitrophenyl-beta-D-galactopyranoside (pNPGp), with higher activity for pNPAp. Shows hydrolysis activity against p-nitrophenyl-beta-D-fucopyranoside (pNPFp), but not against p-nitrophenyl-alpha-L-arabinofuranoside (pNPAf), o-nitrophenyl-beta-D-galactopyranoside (oNPGp), p-nitrophenyl-beta-D-xylopyranoside (pNPXp), p-nitrophenyl-beta-D-glucopyranoside (pNPGLp), p-nitrophenyl-beta-D-cellobiopyranoside (pNPCp), p-nitrophenyl-beta-lactopyranoside (pNPLp) or p-nitrophenyl-alpha-galactopyranoside (pNPalphaGp). No detectable activity against arabinan or arabinoxylan, but activity against arabinogalactan can be detected. Increases degradation activity of alpha-L-arabinofuranosidase (ArfA) and endo-1,4-beta-xylanase (XynA) when corn fiber gum and corn stem powder are used as substrates.</text>
</comment>
<comment type="catalytic activity">
    <reaction evidence="4">
        <text>Hydrolysis of terminal non-reducing beta-D-galactose residues in beta-D-galactosides.</text>
        <dbReference type="EC" id="3.2.1.23"/>
    </reaction>
</comment>
<comment type="activity regulation">
    <text evidence="4">Inhibited by Cu(2+), Hg(2+) and Zn(2+). No effect with Ca(2+), Mg(2+), Mn(2+) or excess EDTA (10 mM).</text>
</comment>
<comment type="biophysicochemical properties">
    <kinetics>
        <KM evidence="4">1.51 mM for pNPAp (at 37 degrees Celsius and pH 6.0)</KM>
        <KM evidence="4">6.06 mM for pNPGp (at 37 degrees Celsius and pH 6.0)</KM>
        <Vmax evidence="4">10.4 umol/min/mg enzyme with pNPAp as substrate (at 37 degrees Celsius and pH 6.0)</Vmax>
        <Vmax evidence="4">2.5 umol/min/mg enzyme with pNPGp as substrate (at 37 degrees Celsius and pH 6.0)</Vmax>
    </kinetics>
    <phDependence>
        <text evidence="4">Optimum pH is 6.0 for activities against both pNPAp and pNPGp. Stable in the range of pH 6.0-8.0.</text>
    </phDependence>
    <temperatureDependence>
        <text evidence="4">Optimum temperature is 30-40 degrees Celsius for activities against both pNPAp and pNPGp when incubated 10 minutes at pH 6.0. Both activities completely lost after heating at 50 degrees Celsius for 20 minutes.</text>
    </temperatureDependence>
</comment>
<comment type="subunit">
    <text evidence="4">Dimer.</text>
</comment>
<comment type="similarity">
    <text evidence="3">Belongs to the glycosyl hydrolase 42 family.</text>
</comment>
<keyword id="KW-0903">Direct protein sequencing</keyword>
<keyword id="KW-0326">Glycosidase</keyword>
<keyword id="KW-0378">Hydrolase</keyword>
<keyword id="KW-0479">Metal-binding</keyword>
<keyword id="KW-1185">Reference proteome</keyword>
<keyword id="KW-0862">Zinc</keyword>
<gene>
    <name type="primary">bgaA</name>
    <name type="ordered locus">Clocel_2022</name>
</gene>
<accession>D9SM34</accession>
<accession>Q8GEE3</accession>
<proteinExistence type="evidence at protein level"/>
<dbReference type="EC" id="3.2.1.23"/>
<dbReference type="EMBL" id="AY128945">
    <property type="protein sequence ID" value="AAN05452.1"/>
    <property type="molecule type" value="Genomic_DNA"/>
</dbReference>
<dbReference type="EMBL" id="CP002160">
    <property type="protein sequence ID" value="ADL51765.1"/>
    <property type="molecule type" value="Genomic_DNA"/>
</dbReference>
<dbReference type="RefSeq" id="WP_010077016.1">
    <property type="nucleotide sequence ID" value="NC_014393.1"/>
</dbReference>
<dbReference type="SMR" id="D9SM34"/>
<dbReference type="STRING" id="573061.Clocel_2022"/>
<dbReference type="CAZy" id="GH42">
    <property type="family name" value="Glycoside Hydrolase Family 42"/>
</dbReference>
<dbReference type="KEGG" id="ccb:Clocel_2022"/>
<dbReference type="eggNOG" id="COG1874">
    <property type="taxonomic scope" value="Bacteria"/>
</dbReference>
<dbReference type="HOGENOM" id="CLU_012430_1_0_9"/>
<dbReference type="OrthoDB" id="9800974at2"/>
<dbReference type="Proteomes" id="UP000002730">
    <property type="component" value="Chromosome"/>
</dbReference>
<dbReference type="GO" id="GO:0009341">
    <property type="term" value="C:beta-galactosidase complex"/>
    <property type="evidence" value="ECO:0007669"/>
    <property type="project" value="InterPro"/>
</dbReference>
<dbReference type="GO" id="GO:0004565">
    <property type="term" value="F:beta-galactosidase activity"/>
    <property type="evidence" value="ECO:0007669"/>
    <property type="project" value="UniProtKB-EC"/>
</dbReference>
<dbReference type="GO" id="GO:0046872">
    <property type="term" value="F:metal ion binding"/>
    <property type="evidence" value="ECO:0007669"/>
    <property type="project" value="UniProtKB-KW"/>
</dbReference>
<dbReference type="GO" id="GO:0006012">
    <property type="term" value="P:galactose metabolic process"/>
    <property type="evidence" value="ECO:0007669"/>
    <property type="project" value="InterPro"/>
</dbReference>
<dbReference type="CDD" id="cd03143">
    <property type="entry name" value="A4_beta-galactosidase_middle_domain"/>
    <property type="match status" value="1"/>
</dbReference>
<dbReference type="Gene3D" id="3.40.50.880">
    <property type="match status" value="1"/>
</dbReference>
<dbReference type="Gene3D" id="3.20.20.80">
    <property type="entry name" value="Glycosidases"/>
    <property type="match status" value="1"/>
</dbReference>
<dbReference type="InterPro" id="IPR013739">
    <property type="entry name" value="Beta_galactosidase_C"/>
</dbReference>
<dbReference type="InterPro" id="IPR013738">
    <property type="entry name" value="Beta_galactosidase_Trimer"/>
</dbReference>
<dbReference type="InterPro" id="IPR029062">
    <property type="entry name" value="Class_I_gatase-like"/>
</dbReference>
<dbReference type="InterPro" id="IPR003476">
    <property type="entry name" value="Glyco_hydro_42"/>
</dbReference>
<dbReference type="InterPro" id="IPR013529">
    <property type="entry name" value="Glyco_hydro_42_N"/>
</dbReference>
<dbReference type="InterPro" id="IPR017853">
    <property type="entry name" value="Glycoside_hydrolase_SF"/>
</dbReference>
<dbReference type="PANTHER" id="PTHR36447">
    <property type="entry name" value="BETA-GALACTOSIDASE GANA"/>
    <property type="match status" value="1"/>
</dbReference>
<dbReference type="PANTHER" id="PTHR36447:SF2">
    <property type="entry name" value="BETA-GALACTOSIDASE YESZ"/>
    <property type="match status" value="1"/>
</dbReference>
<dbReference type="Pfam" id="PF02449">
    <property type="entry name" value="Glyco_hydro_42"/>
    <property type="match status" value="1"/>
</dbReference>
<dbReference type="Pfam" id="PF08533">
    <property type="entry name" value="Glyco_hydro_42C"/>
    <property type="match status" value="1"/>
</dbReference>
<dbReference type="Pfam" id="PF08532">
    <property type="entry name" value="Glyco_hydro_42M"/>
    <property type="match status" value="1"/>
</dbReference>
<dbReference type="PIRSF" id="PIRSF001084">
    <property type="entry name" value="B-galactosidase"/>
    <property type="match status" value="1"/>
</dbReference>
<dbReference type="SUPFAM" id="SSF51445">
    <property type="entry name" value="(Trans)glycosidases"/>
    <property type="match status" value="1"/>
</dbReference>
<dbReference type="SUPFAM" id="SSF52317">
    <property type="entry name" value="Class I glutamine amidotransferase-like"/>
    <property type="match status" value="1"/>
</dbReference>
<evidence type="ECO:0000250" key="1">
    <source>
        <dbReference type="UniProtKB" id="O69315"/>
    </source>
</evidence>
<evidence type="ECO:0000250" key="2">
    <source>
        <dbReference type="UniProtKB" id="P19668"/>
    </source>
</evidence>
<evidence type="ECO:0000255" key="3"/>
<evidence type="ECO:0000269" key="4">
    <source>
    </source>
</evidence>
<evidence type="ECO:0000303" key="5">
    <source>
    </source>
</evidence>
<evidence type="ECO:0000305" key="6"/>
<evidence type="ECO:0000312" key="7">
    <source>
        <dbReference type="EMBL" id="AAN05452.1"/>
    </source>
</evidence>
<evidence type="ECO:0000312" key="8">
    <source>
        <dbReference type="EMBL" id="ADL51765.1"/>
    </source>
</evidence>
<name>BGAL_CLOC7</name>
<sequence length="659" mass="76464">MRIGVDYYPEHWDRQLWEKDAQLMKEIGVKVVRLAEFAWCKLEPIEGQYDFKWLDDVIEIFSVRNIEIVLGTPTNTPPLWLYEKYPDAIQVNESGERQFIGIRGHRCYNSSSMRKYTKAIVEAMTERYANNKAVIGWQIDNELDATHCCCDNCTEKFRGWLKNKYSTLENINKEYGNVVWSGEYSAWSQVTAPLGGSPFLNPSYLLDYNRFASDSMVEYIDFQREIIRKNCPSQFITTNTWFTGNLPNFYDAFENLDFVSYDNYPTTNEITDEEELHSHAFHCDLMRGIKKKNFWIMEQLSGTPGCWMPMQRTPKPGMIKGYSFQAIGRGAETVVHFRWRNAIIGAEMFWHGILDHSNVKGRRFYEFAELCREVNKINEEIPDYKINNEVAILYSSDQDFAFKIQPQVEGLYYLQQLKAFHNALIRLGVGTDIINWSESLNKYKVVIAPTLYLTDDNVTTELYRFVEAGGTLILTNRTGVKNMNNVCLMEQMPSNLKECAGVVVKEYDPIGHSIHTIKDEAGKVYQCKQWCDILEPTTAKVIATYNDDFYIDEAAVTVNKYKKGNVYYLGTVFNSDYYIELLSKILDEKELPYYKKLPYGLELSVLENENGKYLMVFNNSNEIKCFEGKHEGKSIIRNELDGKSFTLEPYGIEVLQLVE</sequence>
<reference evidence="6 7" key="1">
    <citation type="journal article" date="2002" name="J. Bacteriol.">
        <title>Characterization of two noncellulosomal subunits, ArfA and BgaA, from Clostridium cellulovorans that cooperate with the cellulosome in plant cell wall degradation.</title>
        <authorList>
            <person name="Kosugi A."/>
            <person name="Murashima K."/>
            <person name="Doi R.H."/>
        </authorList>
    </citation>
    <scope>NUCLEOTIDE SEQUENCE [GENOMIC DNA]</scope>
    <scope>PROTEIN SEQUENCE OF 2-5</scope>
    <scope>FUNCTION</scope>
    <scope>CATALYTIC ACTIVITY</scope>
    <scope>ACTIVITY REGULATION</scope>
    <scope>BIOPHYSICOCHEMICAL PROPERTIES</scope>
    <scope>SUBSTRATE SPECIFICITY</scope>
    <scope>SUBUNIT</scope>
    <source>
        <strain>ATCC 35296 / DSM 3052 / OCM 3 / 743B</strain>
    </source>
</reference>
<reference evidence="8" key="2">
    <citation type="submission" date="2010-08" db="EMBL/GenBank/DDBJ databases">
        <title>Complete sequence of Clostridium cellulovorans 743B.</title>
        <authorList>
            <consortium name="US DOE Joint Genome Institute"/>
            <person name="Lucas S."/>
            <person name="Copeland A."/>
            <person name="Lapidus A."/>
            <person name="Cheng J.-F."/>
            <person name="Bruce D."/>
            <person name="Goodwin L."/>
            <person name="Pitluck S."/>
            <person name="Chertkov O."/>
            <person name="Detter J.C."/>
            <person name="Han C."/>
            <person name="Tapia R."/>
            <person name="Land M."/>
            <person name="Hauser L."/>
            <person name="Chang Y.-J."/>
            <person name="Jeffries C."/>
            <person name="Kyrpides N."/>
            <person name="Ivanova N."/>
            <person name="Mikhailova N."/>
            <person name="Hemme C.L."/>
            <person name="Woyke T."/>
        </authorList>
    </citation>
    <scope>NUCLEOTIDE SEQUENCE [LARGE SCALE GENOMIC DNA]</scope>
    <source>
        <strain evidence="8">ATCC 35296 / DSM 3052 / OCM 3 / 743B</strain>
    </source>
</reference>